<name>ACADS_HUMAN</name>
<sequence length="412" mass="44297">MAAALLARASGPARRALCPRAWRQLHTIYQSVELPETHQMLLQTCRDFAEKELFPIAAQVDKEHLFPAAQVKKMGGLGLLAMDVPEELGGAGLDYLAYAIAMEEISRGCASTGVIMSVNNSLYLGPILKFGSKEQKQAWVTPFTSGDKIGCFALSEPGNGSDAGAASTTARAEGDSWVLNGTKAWITNAWEASAAVVFASTDRALQNKGISAFLVPMPTPGLTLGKKEDKLGIRGSSTANLIFEDCRIPKDSILGEPGMGFKIAMQTLDMGRIGIASQALGIAQTALDCAVNYAENRMAFGAPLTKLQVIQFKLADMALALESARLLTWRAAMLKDNKKPFIKEAAMAKLAASEAATAISHQAIQILGGMGYVTEMPAERHYRDARITEIYEGTSEIQRLVIAGHLLRSYRS</sequence>
<gene>
    <name type="primary">ACADS</name>
</gene>
<comment type="function">
    <text evidence="1 4 7">Short-chain specific acyl-CoA dehydrogenase is one of the acyl-CoA dehydrogenases that catalyze the first step of mitochondrial fatty acid beta-oxidation, an aerobic process breaking down fatty acids into acetyl-CoA and allowing the production of energy from fats (By similarity). The first step of fatty acid beta-oxidation consists in the removal of one hydrogen from C-2 and C-3 of the straight-chain fatty acyl-CoA thioester, resulting in the formation of trans-2-enoyl-CoA (By similarity). Among the different mitochondrial acyl-CoA dehydrogenases, short-chain specific acyl-CoA dehydrogenase acts specifically on acyl-CoAs with saturated 4 to 6 carbons long primary chains (PubMed:11134486, PubMed:21237683).</text>
</comment>
<comment type="catalytic activity">
    <reaction evidence="7">
        <text>a short-chain 2,3-saturated fatty acyl-CoA + oxidized [electron-transfer flavoprotein] + H(+) = a short-chain (2E)-enoyl-CoA + reduced [electron-transfer flavoprotein]</text>
        <dbReference type="Rhea" id="RHEA:47196"/>
        <dbReference type="Rhea" id="RHEA-COMP:10685"/>
        <dbReference type="Rhea" id="RHEA-COMP:10686"/>
        <dbReference type="ChEBI" id="CHEBI:15378"/>
        <dbReference type="ChEBI" id="CHEBI:57692"/>
        <dbReference type="ChEBI" id="CHEBI:58307"/>
        <dbReference type="ChEBI" id="CHEBI:87487"/>
        <dbReference type="ChEBI" id="CHEBI:87488"/>
        <dbReference type="EC" id="1.3.8.1"/>
    </reaction>
    <physiologicalReaction direction="left-to-right" evidence="11">
        <dbReference type="Rhea" id="RHEA:47197"/>
    </physiologicalReaction>
</comment>
<comment type="catalytic activity">
    <reaction evidence="7">
        <text>butanoyl-CoA + oxidized [electron-transfer flavoprotein] + H(+) = (2E)-butenoyl-CoA + reduced [electron-transfer flavoprotein]</text>
        <dbReference type="Rhea" id="RHEA:24004"/>
        <dbReference type="Rhea" id="RHEA-COMP:10685"/>
        <dbReference type="Rhea" id="RHEA-COMP:10686"/>
        <dbReference type="ChEBI" id="CHEBI:15378"/>
        <dbReference type="ChEBI" id="CHEBI:57332"/>
        <dbReference type="ChEBI" id="CHEBI:57371"/>
        <dbReference type="ChEBI" id="CHEBI:57692"/>
        <dbReference type="ChEBI" id="CHEBI:58307"/>
        <dbReference type="EC" id="1.3.8.1"/>
    </reaction>
    <physiologicalReaction direction="left-to-right" evidence="11">
        <dbReference type="Rhea" id="RHEA:24005"/>
    </physiologicalReaction>
</comment>
<comment type="catalytic activity">
    <reaction evidence="3">
        <text>pentanoyl-CoA + oxidized [electron-transfer flavoprotein] + H(+) = (2E)-pentenoyl-CoA + reduced [electron-transfer flavoprotein]</text>
        <dbReference type="Rhea" id="RHEA:43456"/>
        <dbReference type="Rhea" id="RHEA-COMP:10685"/>
        <dbReference type="Rhea" id="RHEA-COMP:10686"/>
        <dbReference type="ChEBI" id="CHEBI:15378"/>
        <dbReference type="ChEBI" id="CHEBI:57389"/>
        <dbReference type="ChEBI" id="CHEBI:57692"/>
        <dbReference type="ChEBI" id="CHEBI:58307"/>
        <dbReference type="ChEBI" id="CHEBI:86160"/>
    </reaction>
    <physiologicalReaction direction="left-to-right" evidence="11">
        <dbReference type="Rhea" id="RHEA:43457"/>
    </physiologicalReaction>
</comment>
<comment type="catalytic activity">
    <reaction evidence="7">
        <text>hexanoyl-CoA + oxidized [electron-transfer flavoprotein] + H(+) = (2E)-hexenoyl-CoA + reduced [electron-transfer flavoprotein]</text>
        <dbReference type="Rhea" id="RHEA:43464"/>
        <dbReference type="Rhea" id="RHEA-COMP:10685"/>
        <dbReference type="Rhea" id="RHEA-COMP:10686"/>
        <dbReference type="ChEBI" id="CHEBI:15378"/>
        <dbReference type="ChEBI" id="CHEBI:57692"/>
        <dbReference type="ChEBI" id="CHEBI:58307"/>
        <dbReference type="ChEBI" id="CHEBI:62077"/>
        <dbReference type="ChEBI" id="CHEBI:62620"/>
    </reaction>
    <physiologicalReaction direction="left-to-right" evidence="11">
        <dbReference type="Rhea" id="RHEA:43465"/>
    </physiologicalReaction>
</comment>
<comment type="cofactor">
    <cofactor evidence="9">
        <name>FAD</name>
        <dbReference type="ChEBI" id="CHEBI:57692"/>
    </cofactor>
    <text evidence="9">Binds 1 FAD per subunit.</text>
</comment>
<comment type="pathway">
    <text evidence="11">Lipid metabolism; mitochondrial fatty acid beta-oxidation.</text>
</comment>
<comment type="subunit">
    <text evidence="9">Homotetramer.</text>
</comment>
<comment type="interaction">
    <interactant intactId="EBI-3904404">
        <id>P16219</id>
    </interactant>
    <interactant intactId="EBI-749514">
        <id>P16444</id>
        <label>DPEP1</label>
    </interactant>
    <organismsDiffer>false</organismsDiffer>
    <experiments>2</experiments>
</comment>
<comment type="subcellular location">
    <subcellularLocation>
        <location evidence="3">Mitochondrion matrix</location>
    </subcellularLocation>
</comment>
<comment type="disease" evidence="4 6 8">
    <disease id="DI-02301">
        <name>Acyl-CoA dehydrogenase short-chain deficiency</name>
        <acronym>ACADSD</acronym>
        <description>An inborn error of mitochondrial fatty acid beta-oxidation resulting in acute acidosis and muscle weakness in infants, and a form of lipid-storage myopathy in adults.</description>
        <dbReference type="MIM" id="201470"/>
    </disease>
    <text>The disease is caused by variants affecting the gene represented in this entry.</text>
</comment>
<comment type="similarity">
    <text evidence="10">Belongs to the acyl-CoA dehydrogenase family.</text>
</comment>
<comment type="online information" name="Wikipedia">
    <link uri="https://en.wikipedia.org/wiki/Butyryl_CoA_dehydrogenase"/>
    <text>Butyryl-CoA dehydrogenase entry</text>
</comment>
<keyword id="KW-0002">3D-structure</keyword>
<keyword id="KW-0007">Acetylation</keyword>
<keyword id="KW-0903">Direct protein sequencing</keyword>
<keyword id="KW-0225">Disease variant</keyword>
<keyword id="KW-0274">FAD</keyword>
<keyword id="KW-0276">Fatty acid metabolism</keyword>
<keyword id="KW-0285">Flavoprotein</keyword>
<keyword id="KW-0443">Lipid metabolism</keyword>
<keyword id="KW-0496">Mitochondrion</keyword>
<keyword id="KW-0560">Oxidoreductase</keyword>
<keyword id="KW-0597">Phosphoprotein</keyword>
<keyword id="KW-1267">Proteomics identification</keyword>
<keyword id="KW-1185">Reference proteome</keyword>
<keyword id="KW-0809">Transit peptide</keyword>
<reference key="1">
    <citation type="journal article" date="1989" name="J. Clin. Invest.">
        <title>Molecular cloning and nucleotide sequence of complementary DNAs encoding human short chain acyl-coenzyme A dehydrogenase and the study of the molecular basis of human short chain acyl-coenzyme A dehydrogenase deficiency.</title>
        <authorList>
            <person name="Naito E."/>
            <person name="Ozasa H."/>
            <person name="Ikeda Y."/>
            <person name="Tanaka K."/>
        </authorList>
    </citation>
    <scope>NUCLEOTIDE SEQUENCE [MRNA]</scope>
</reference>
<reference key="2">
    <citation type="journal article" date="1997" name="Mamm. Genome">
        <title>Structural organization of the human short-chain acyl-CoA dehydrogenase gene.</title>
        <authorList>
            <person name="Corydon M.J."/>
            <person name="Andresen B.S."/>
            <person name="Bross P."/>
            <person name="Kjeldsen M."/>
            <person name="Andreasen P.H."/>
            <person name="Eiberg H."/>
            <person name="Koelvraa S."/>
            <person name="Gregersen N."/>
        </authorList>
    </citation>
    <scope>NUCLEOTIDE SEQUENCE [GENOMIC DNA]</scope>
</reference>
<reference key="3">
    <citation type="submission" date="1997-01" db="EMBL/GenBank/DDBJ databases">
        <title>Transcription map of the 5cM region surrounding the hepatocyte nuclear factor-1a/MODY3 gene on chromosome 12.</title>
        <authorList>
            <person name="Yamagata K."/>
            <person name="Oda N."/>
            <person name="Furuta H."/>
            <person name="Vaxillaire M."/>
            <person name="Southam L."/>
            <person name="Boriraj V."/>
            <person name="Chen X."/>
            <person name="Oda Y."/>
            <person name="Takeda J."/>
            <person name="Yamada S."/>
            <person name="Nishigori H."/>
            <person name="Lebeau M.M."/>
            <person name="Lathrop M."/>
            <person name="Cox R.D."/>
            <person name="Bell G.I."/>
        </authorList>
    </citation>
    <scope>NUCLEOTIDE SEQUENCE [GENOMIC DNA]</scope>
</reference>
<reference key="4">
    <citation type="journal article" date="2004" name="Genome Res.">
        <title>The status, quality, and expansion of the NIH full-length cDNA project: the Mammalian Gene Collection (MGC).</title>
        <authorList>
            <consortium name="The MGC Project Team"/>
        </authorList>
    </citation>
    <scope>NUCLEOTIDE SEQUENCE [LARGE SCALE MRNA]</scope>
    <source>
        <tissue>Retinal pigment epithelium</tissue>
    </source>
</reference>
<reference key="5">
    <citation type="journal article" date="1992" name="Electrophoresis">
        <title>Human liver protein map: a reference database established by microsequencing and gel comparison.</title>
        <authorList>
            <person name="Hochstrasser D.F."/>
            <person name="Frutiger S."/>
            <person name="Paquet N."/>
            <person name="Bairoch A."/>
            <person name="Ravier F."/>
            <person name="Pasquali C."/>
            <person name="Sanchez J.-C."/>
            <person name="Tissot J.-D."/>
            <person name="Bjellqvist B."/>
            <person name="Vargas R."/>
            <person name="Appel R.D."/>
            <person name="Hughes G.J."/>
        </authorList>
    </citation>
    <scope>PROTEIN SEQUENCE OF 25-34</scope>
    <source>
        <tissue>Liver</tissue>
    </source>
</reference>
<reference key="6">
    <citation type="journal article" date="2011" name="BMC Syst. Biol.">
        <title>Initial characterization of the human central proteome.</title>
        <authorList>
            <person name="Burkard T.R."/>
            <person name="Planyavsky M."/>
            <person name="Kaupe I."/>
            <person name="Breitwieser F.P."/>
            <person name="Buerckstuemmer T."/>
            <person name="Bennett K.L."/>
            <person name="Superti-Furga G."/>
            <person name="Colinge J."/>
        </authorList>
    </citation>
    <scope>IDENTIFICATION BY MASS SPECTROMETRY [LARGE SCALE ANALYSIS]</scope>
</reference>
<reference key="7">
    <citation type="journal article" date="2011" name="Mol. Genet. Metab.">
        <title>Identification and characterization of new long chain acyl-CoA dehydrogenases.</title>
        <authorList>
            <person name="He M."/>
            <person name="Pei Z."/>
            <person name="Mohsen A.W."/>
            <person name="Watkins P."/>
            <person name="Murdoch G."/>
            <person name="Van Veldhoven P.P."/>
            <person name="Ensenauer R."/>
            <person name="Vockley J."/>
        </authorList>
    </citation>
    <scope>FUNCTION</scope>
    <scope>CATALYTIC ACTIVITY</scope>
    <scope>SUBSTRATE SPECIFICITY</scope>
</reference>
<reference key="8">
    <citation type="journal article" date="2014" name="J. Proteomics">
        <title>An enzyme assisted RP-RPLC approach for in-depth analysis of human liver phosphoproteome.</title>
        <authorList>
            <person name="Bian Y."/>
            <person name="Song C."/>
            <person name="Cheng K."/>
            <person name="Dong M."/>
            <person name="Wang F."/>
            <person name="Huang J."/>
            <person name="Sun D."/>
            <person name="Wang L."/>
            <person name="Ye M."/>
            <person name="Zou H."/>
        </authorList>
    </citation>
    <scope>IDENTIFICATION BY MASS SPECTROMETRY [LARGE SCALE ANALYSIS]</scope>
    <source>
        <tissue>Liver</tissue>
    </source>
</reference>
<reference key="9">
    <citation type="journal article" date="2015" name="Proteomics">
        <title>N-terminome analysis of the human mitochondrial proteome.</title>
        <authorList>
            <person name="Vaca Jacome A.S."/>
            <person name="Rabilloud T."/>
            <person name="Schaeffer-Reiss C."/>
            <person name="Rompais M."/>
            <person name="Ayoub D."/>
            <person name="Lane L."/>
            <person name="Bairoch A."/>
            <person name="Van Dorsselaer A."/>
            <person name="Carapito C."/>
        </authorList>
    </citation>
    <scope>IDENTIFICATION BY MASS SPECTROMETRY [LARGE SCALE ANALYSIS]</scope>
</reference>
<reference key="10">
    <citation type="submission" date="2009-02" db="PDB data bank">
        <title>Crystal structure of human RAB14.</title>
        <authorList>
            <consortium name="Structural genomics consortium (SGC)"/>
        </authorList>
    </citation>
    <scope>X-RAY CRYSTALLOGRAPHY (1.9 ANGSTROMS) OF 30-412 IN COMPLEX WITH FAD AND SUBSTRATE ANALOG</scope>
    <scope>COFACTOR</scope>
</reference>
<reference key="11">
    <citation type="journal article" date="1990" name="J. Clin. Invest.">
        <title>Identification of two variant short chain acyl-coenzyme A dehydrogenase alleles, each containing a different point mutation in a patient with short chain acyl-coenzyme A dehydrogenase deficiency.</title>
        <authorList>
            <person name="Naito E."/>
            <person name="Indo Y."/>
            <person name="Tanaka K."/>
        </authorList>
    </citation>
    <scope>VARIANTS ACADSD TRP-46 AND CYS-107</scope>
</reference>
<reference key="12">
    <citation type="journal article" date="1998" name="Hum. Mol. Genet.">
        <title>Identification of four new mutations in the short-chain acyl-CoA dehydrogenase (SCAD) gene in two patients: one of the variant alleles, 511C--&gt;T, is present at an unexpectedly high frequency in the general population, as was the case for 625G--&gt;A, together conferring susceptibility to ethylmalonic aciduria.</title>
        <authorList>
            <person name="Gregersen N."/>
            <person name="Winter V.S."/>
            <person name="Corydon M.J."/>
            <person name="Corydon T.J."/>
            <person name="Rinaldo P."/>
            <person name="Ribes A."/>
            <person name="Martinez G."/>
            <person name="Bennett M.J."/>
            <person name="Vianey-Saban C."/>
            <person name="Bhala A."/>
            <person name="Hale D.E."/>
            <person name="Lehnert W."/>
            <person name="Kmoch S."/>
            <person name="Roig M."/>
            <person name="Riudor E."/>
            <person name="Eiberg H."/>
            <person name="Andresen B.S."/>
            <person name="Bross P."/>
            <person name="Bolund L.A."/>
            <person name="Koelvraa S."/>
        </authorList>
    </citation>
    <scope>VARIANTS ACADSD CYS-92; ARG-177 AND CYS-383</scope>
    <scope>VARIANTS TRP-171 AND SER-209</scope>
</reference>
<reference key="13">
    <citation type="journal article" date="2001" name="Pediatr. Res.">
        <title>Role of common gene variations in the molecular pathogenesis of short-chain acyl-CoA dehydrogenase deficiency.</title>
        <authorList>
            <person name="Corydon M.J."/>
            <person name="Vockley J."/>
            <person name="Rinaldo P."/>
            <person name="Rhead W.J."/>
            <person name="Kjeldsen M."/>
            <person name="Winter V.S."/>
            <person name="Riggs C."/>
            <person name="Babovic-Vuksanovic D."/>
            <person name="Smeitink J."/>
            <person name="De Jong J."/>
            <person name="Levy H."/>
            <person name="Sewell A.C."/>
            <person name="Roe C."/>
            <person name="Matern D."/>
            <person name="Dasouki M."/>
            <person name="Gregersen N."/>
        </authorList>
    </citation>
    <scope>VARIANTS ACADSD SER-90; GLU-104 DEL; VAL-192; TRP-325; LEU-353 AND TRP-380</scope>
    <scope>VARIANTS TRP-171 AND SER-209</scope>
    <scope>CHARACTERIZATION OF VARIANTS ACADSD SER-90; GLU-104 DEL; VAL-192; TRP-325; LEU-353 AND TRP-380</scope>
    <scope>CHARACTERIZATION OF VARIANTS TRP-171 AND SER-209</scope>
    <scope>FUNCTION</scope>
    <scope>CATALYTIC ACTIVITY</scope>
    <scope>PATHWAY</scope>
</reference>
<evidence type="ECO:0000250" key="1">
    <source>
        <dbReference type="UniProtKB" id="P15651"/>
    </source>
</evidence>
<evidence type="ECO:0000250" key="2">
    <source>
        <dbReference type="UniProtKB" id="Q07417"/>
    </source>
</evidence>
<evidence type="ECO:0000250" key="3">
    <source>
        <dbReference type="UniProtKB" id="Q3ZBF6"/>
    </source>
</evidence>
<evidence type="ECO:0000269" key="4">
    <source>
    </source>
</evidence>
<evidence type="ECO:0000269" key="5">
    <source>
    </source>
</evidence>
<evidence type="ECO:0000269" key="6">
    <source>
    </source>
</evidence>
<evidence type="ECO:0000269" key="7">
    <source>
    </source>
</evidence>
<evidence type="ECO:0000269" key="8">
    <source>
    </source>
</evidence>
<evidence type="ECO:0000269" key="9">
    <source ref="10"/>
</evidence>
<evidence type="ECO:0000305" key="10"/>
<evidence type="ECO:0000305" key="11">
    <source>
    </source>
</evidence>
<evidence type="ECO:0007829" key="12">
    <source>
        <dbReference type="PDB" id="2VIG"/>
    </source>
</evidence>
<evidence type="ECO:0007829" key="13">
    <source>
        <dbReference type="PDB" id="7Y0A"/>
    </source>
</evidence>
<evidence type="ECO:0007829" key="14">
    <source>
        <dbReference type="PDB" id="8SGS"/>
    </source>
</evidence>
<protein>
    <recommendedName>
        <fullName>Short-chain specific acyl-CoA dehydrogenase, mitochondrial</fullName>
        <shortName>SCAD</shortName>
        <ecNumber evidence="7">1.3.8.1</ecNumber>
    </recommendedName>
    <alternativeName>
        <fullName>Butyryl-CoA dehydrogenase</fullName>
    </alternativeName>
</protein>
<organism>
    <name type="scientific">Homo sapiens</name>
    <name type="common">Human</name>
    <dbReference type="NCBI Taxonomy" id="9606"/>
    <lineage>
        <taxon>Eukaryota</taxon>
        <taxon>Metazoa</taxon>
        <taxon>Chordata</taxon>
        <taxon>Craniata</taxon>
        <taxon>Vertebrata</taxon>
        <taxon>Euteleostomi</taxon>
        <taxon>Mammalia</taxon>
        <taxon>Eutheria</taxon>
        <taxon>Euarchontoglires</taxon>
        <taxon>Primates</taxon>
        <taxon>Haplorrhini</taxon>
        <taxon>Catarrhini</taxon>
        <taxon>Hominidae</taxon>
        <taxon>Homo</taxon>
    </lineage>
</organism>
<dbReference type="EC" id="1.3.8.1" evidence="7"/>
<dbReference type="EMBL" id="M26393">
    <property type="protein sequence ID" value="AAA60307.1"/>
    <property type="molecule type" value="mRNA"/>
</dbReference>
<dbReference type="EMBL" id="Z80345">
    <property type="protein sequence ID" value="CAB02492.1"/>
    <property type="molecule type" value="Genomic_DNA"/>
</dbReference>
<dbReference type="EMBL" id="Z80347">
    <property type="protein sequence ID" value="CAB02492.1"/>
    <property type="status" value="JOINED"/>
    <property type="molecule type" value="Genomic_DNA"/>
</dbReference>
<dbReference type="EMBL" id="U83992">
    <property type="protein sequence ID" value="AAD00552.1"/>
    <property type="molecule type" value="Genomic_DNA"/>
</dbReference>
<dbReference type="EMBL" id="U83991">
    <property type="protein sequence ID" value="AAD00552.1"/>
    <property type="status" value="JOINED"/>
    <property type="molecule type" value="Genomic_DNA"/>
</dbReference>
<dbReference type="EMBL" id="BC025963">
    <property type="protein sequence ID" value="AAH25963.1"/>
    <property type="molecule type" value="mRNA"/>
</dbReference>
<dbReference type="CCDS" id="CCDS9207.1"/>
<dbReference type="PIR" id="A30605">
    <property type="entry name" value="A30605"/>
</dbReference>
<dbReference type="RefSeq" id="NP_000008.1">
    <property type="nucleotide sequence ID" value="NM_000017.4"/>
</dbReference>
<dbReference type="RefSeq" id="NP_001289483.1">
    <property type="nucleotide sequence ID" value="NM_001302554.1"/>
</dbReference>
<dbReference type="PDB" id="2VIG">
    <property type="method" value="X-ray"/>
    <property type="resolution" value="1.90 A"/>
    <property type="chains" value="A/B/C/D/E/F/G/H=30-412"/>
</dbReference>
<dbReference type="PDB" id="7Y0A">
    <property type="method" value="X-ray"/>
    <property type="resolution" value="2.32 A"/>
    <property type="chains" value="A/B/C/D=25-412"/>
</dbReference>
<dbReference type="PDB" id="7Y0B">
    <property type="method" value="X-ray"/>
    <property type="resolution" value="2.08 A"/>
    <property type="chains" value="A/B/C/D=25-412"/>
</dbReference>
<dbReference type="PDB" id="8SGS">
    <property type="method" value="EM"/>
    <property type="resolution" value="3.15 A"/>
    <property type="chains" value="A/B/C/D=1-412"/>
</dbReference>
<dbReference type="PDBsum" id="2VIG"/>
<dbReference type="PDBsum" id="7Y0A"/>
<dbReference type="PDBsum" id="7Y0B"/>
<dbReference type="PDBsum" id="8SGS"/>
<dbReference type="EMDB" id="EMD-40466"/>
<dbReference type="SMR" id="P16219"/>
<dbReference type="BioGRID" id="106553">
    <property type="interactions" value="24"/>
</dbReference>
<dbReference type="FunCoup" id="P16219">
    <property type="interactions" value="842"/>
</dbReference>
<dbReference type="IntAct" id="P16219">
    <property type="interactions" value="16"/>
</dbReference>
<dbReference type="MINT" id="P16219"/>
<dbReference type="STRING" id="9606.ENSP00000242592"/>
<dbReference type="DrugBank" id="DB03059">
    <property type="generic name" value="Acetoacetyl-CoA"/>
</dbReference>
<dbReference type="DrugBank" id="DB03147">
    <property type="generic name" value="Flavin adenine dinucleotide"/>
</dbReference>
<dbReference type="DrugBank" id="DB00157">
    <property type="generic name" value="NADH"/>
</dbReference>
<dbReference type="SwissLipids" id="SLP:000001403"/>
<dbReference type="GlyGen" id="P16219">
    <property type="glycosylation" value="1 site"/>
</dbReference>
<dbReference type="iPTMnet" id="P16219"/>
<dbReference type="MetOSite" id="P16219"/>
<dbReference type="PhosphoSitePlus" id="P16219"/>
<dbReference type="SwissPalm" id="P16219"/>
<dbReference type="BioMuta" id="ACADS"/>
<dbReference type="DMDM" id="113019"/>
<dbReference type="jPOST" id="P16219"/>
<dbReference type="MassIVE" id="P16219"/>
<dbReference type="PaxDb" id="9606-ENSP00000242592"/>
<dbReference type="PeptideAtlas" id="P16219"/>
<dbReference type="ProteomicsDB" id="53323"/>
<dbReference type="Pumba" id="P16219"/>
<dbReference type="Antibodypedia" id="1579">
    <property type="antibodies" value="274 antibodies from 31 providers"/>
</dbReference>
<dbReference type="DNASU" id="35"/>
<dbReference type="Ensembl" id="ENST00000242592.9">
    <property type="protein sequence ID" value="ENSP00000242592.4"/>
    <property type="gene ID" value="ENSG00000122971.9"/>
</dbReference>
<dbReference type="GeneID" id="35"/>
<dbReference type="KEGG" id="hsa:35"/>
<dbReference type="MANE-Select" id="ENST00000242592.9">
    <property type="protein sequence ID" value="ENSP00000242592.4"/>
    <property type="RefSeq nucleotide sequence ID" value="NM_000017.4"/>
    <property type="RefSeq protein sequence ID" value="NP_000008.1"/>
</dbReference>
<dbReference type="UCSC" id="uc001tza.5">
    <property type="organism name" value="human"/>
</dbReference>
<dbReference type="AGR" id="HGNC:90"/>
<dbReference type="CTD" id="35"/>
<dbReference type="DisGeNET" id="35"/>
<dbReference type="GeneCards" id="ACADS"/>
<dbReference type="GeneReviews" id="ACADS"/>
<dbReference type="HGNC" id="HGNC:90">
    <property type="gene designation" value="ACADS"/>
</dbReference>
<dbReference type="HPA" id="ENSG00000122971">
    <property type="expression patterns" value="Tissue enhanced (liver, skeletal muscle)"/>
</dbReference>
<dbReference type="MalaCards" id="ACADS"/>
<dbReference type="MIM" id="201470">
    <property type="type" value="phenotype"/>
</dbReference>
<dbReference type="MIM" id="606885">
    <property type="type" value="gene"/>
</dbReference>
<dbReference type="neXtProt" id="NX_P16219"/>
<dbReference type="OpenTargets" id="ENSG00000122971"/>
<dbReference type="Orphanet" id="26792">
    <property type="disease" value="Short chain acyl-CoA dehydrogenase deficiency"/>
</dbReference>
<dbReference type="PharmGKB" id="PA24426"/>
<dbReference type="VEuPathDB" id="HostDB:ENSG00000122971"/>
<dbReference type="eggNOG" id="KOG0139">
    <property type="taxonomic scope" value="Eukaryota"/>
</dbReference>
<dbReference type="GeneTree" id="ENSGT00940000158866"/>
<dbReference type="HOGENOM" id="CLU_018204_0_2_1"/>
<dbReference type="InParanoid" id="P16219"/>
<dbReference type="OMA" id="LYREAPM"/>
<dbReference type="OrthoDB" id="9988775at2759"/>
<dbReference type="PAN-GO" id="P16219">
    <property type="GO annotations" value="5 GO annotations based on evolutionary models"/>
</dbReference>
<dbReference type="PhylomeDB" id="P16219"/>
<dbReference type="TreeFam" id="TF105019"/>
<dbReference type="BioCyc" id="MetaCyc:HS04619-MONOMER"/>
<dbReference type="PathwayCommons" id="P16219"/>
<dbReference type="Reactome" id="R-HSA-77350">
    <property type="pathway name" value="Beta oxidation of hexanoyl-CoA to butanoyl-CoA"/>
</dbReference>
<dbReference type="Reactome" id="R-HSA-77352">
    <property type="pathway name" value="Beta oxidation of butanoyl-CoA to acetyl-CoA"/>
</dbReference>
<dbReference type="SABIO-RK" id="P16219"/>
<dbReference type="SignaLink" id="P16219"/>
<dbReference type="UniPathway" id="UPA00660"/>
<dbReference type="BioGRID-ORCS" id="35">
    <property type="hits" value="11 hits in 1158 CRISPR screens"/>
</dbReference>
<dbReference type="ChiTaRS" id="ACADS">
    <property type="organism name" value="human"/>
</dbReference>
<dbReference type="EvolutionaryTrace" id="P16219"/>
<dbReference type="GenomeRNAi" id="35"/>
<dbReference type="Pharos" id="P16219">
    <property type="development level" value="Tbio"/>
</dbReference>
<dbReference type="PRO" id="PR:P16219"/>
<dbReference type="Proteomes" id="UP000005640">
    <property type="component" value="Chromosome 12"/>
</dbReference>
<dbReference type="RNAct" id="P16219">
    <property type="molecule type" value="protein"/>
</dbReference>
<dbReference type="Bgee" id="ENSG00000122971">
    <property type="expression patterns" value="Expressed in right lobe of liver and 158 other cell types or tissues"/>
</dbReference>
<dbReference type="ExpressionAtlas" id="P16219">
    <property type="expression patterns" value="baseline and differential"/>
</dbReference>
<dbReference type="GO" id="GO:0005759">
    <property type="term" value="C:mitochondrial matrix"/>
    <property type="evidence" value="ECO:0000250"/>
    <property type="project" value="UniProtKB"/>
</dbReference>
<dbReference type="GO" id="GO:0005739">
    <property type="term" value="C:mitochondrion"/>
    <property type="evidence" value="ECO:0000314"/>
    <property type="project" value="MGI"/>
</dbReference>
<dbReference type="GO" id="GO:0005634">
    <property type="term" value="C:nucleus"/>
    <property type="evidence" value="ECO:0007005"/>
    <property type="project" value="UniProtKB"/>
</dbReference>
<dbReference type="GO" id="GO:0003995">
    <property type="term" value="F:acyl-CoA dehydrogenase activity"/>
    <property type="evidence" value="ECO:0000314"/>
    <property type="project" value="BHF-UCL"/>
</dbReference>
<dbReference type="GO" id="GO:0050660">
    <property type="term" value="F:flavin adenine dinucleotide binding"/>
    <property type="evidence" value="ECO:0007669"/>
    <property type="project" value="InterPro"/>
</dbReference>
<dbReference type="GO" id="GO:0016937">
    <property type="term" value="F:short-chain fatty acyl-CoA dehydrogenase activity"/>
    <property type="evidence" value="ECO:0000250"/>
    <property type="project" value="UniProtKB"/>
</dbReference>
<dbReference type="GO" id="GO:0046359">
    <property type="term" value="P:butyrate catabolic process"/>
    <property type="evidence" value="ECO:0000318"/>
    <property type="project" value="GO_Central"/>
</dbReference>
<dbReference type="GO" id="GO:0006635">
    <property type="term" value="P:fatty acid beta-oxidation"/>
    <property type="evidence" value="ECO:0000304"/>
    <property type="project" value="ProtInc"/>
</dbReference>
<dbReference type="GO" id="GO:0033539">
    <property type="term" value="P:fatty acid beta-oxidation using acyl-CoA dehydrogenase"/>
    <property type="evidence" value="ECO:0000314"/>
    <property type="project" value="BHF-UCL"/>
</dbReference>
<dbReference type="CDD" id="cd01158">
    <property type="entry name" value="SCAD_SBCAD"/>
    <property type="match status" value="1"/>
</dbReference>
<dbReference type="FunFam" id="1.10.540.10:FF:000002">
    <property type="entry name" value="Acyl-CoA dehydrogenase FadE19"/>
    <property type="match status" value="1"/>
</dbReference>
<dbReference type="FunFam" id="1.20.140.10:FF:000004">
    <property type="entry name" value="Acyl-CoA dehydrogenase FadE25"/>
    <property type="match status" value="1"/>
</dbReference>
<dbReference type="FunFam" id="2.40.110.10:FF:000001">
    <property type="entry name" value="Acyl-CoA dehydrogenase, mitochondrial"/>
    <property type="match status" value="1"/>
</dbReference>
<dbReference type="Gene3D" id="1.10.540.10">
    <property type="entry name" value="Acyl-CoA dehydrogenase/oxidase, N-terminal domain"/>
    <property type="match status" value="1"/>
</dbReference>
<dbReference type="Gene3D" id="2.40.110.10">
    <property type="entry name" value="Butyryl-CoA Dehydrogenase, subunit A, domain 2"/>
    <property type="match status" value="1"/>
</dbReference>
<dbReference type="Gene3D" id="1.20.140.10">
    <property type="entry name" value="Butyryl-CoA Dehydrogenase, subunit A, domain 3"/>
    <property type="match status" value="1"/>
</dbReference>
<dbReference type="InterPro" id="IPR006089">
    <property type="entry name" value="Acyl-CoA_DH_CS"/>
</dbReference>
<dbReference type="InterPro" id="IPR006091">
    <property type="entry name" value="Acyl-CoA_Oxase/DH_mid-dom"/>
</dbReference>
<dbReference type="InterPro" id="IPR046373">
    <property type="entry name" value="Acyl-CoA_Oxase/DH_mid-dom_sf"/>
</dbReference>
<dbReference type="InterPro" id="IPR036250">
    <property type="entry name" value="AcylCo_DH-like_C"/>
</dbReference>
<dbReference type="InterPro" id="IPR009075">
    <property type="entry name" value="AcylCo_DH/oxidase_C"/>
</dbReference>
<dbReference type="InterPro" id="IPR013786">
    <property type="entry name" value="AcylCoA_DH/ox_N"/>
</dbReference>
<dbReference type="InterPro" id="IPR037069">
    <property type="entry name" value="AcylCoA_DH/ox_N_sf"/>
</dbReference>
<dbReference type="InterPro" id="IPR009100">
    <property type="entry name" value="AcylCoA_DH/oxidase_NM_dom_sf"/>
</dbReference>
<dbReference type="PANTHER" id="PTHR43884">
    <property type="entry name" value="ACYL-COA DEHYDROGENASE"/>
    <property type="match status" value="1"/>
</dbReference>
<dbReference type="PANTHER" id="PTHR43884:SF12">
    <property type="entry name" value="ISOVALERYL-COA DEHYDROGENASE, MITOCHONDRIAL-RELATED"/>
    <property type="match status" value="1"/>
</dbReference>
<dbReference type="Pfam" id="PF00441">
    <property type="entry name" value="Acyl-CoA_dh_1"/>
    <property type="match status" value="1"/>
</dbReference>
<dbReference type="Pfam" id="PF02770">
    <property type="entry name" value="Acyl-CoA_dh_M"/>
    <property type="match status" value="1"/>
</dbReference>
<dbReference type="Pfam" id="PF02771">
    <property type="entry name" value="Acyl-CoA_dh_N"/>
    <property type="match status" value="1"/>
</dbReference>
<dbReference type="PIRSF" id="PIRSF016578">
    <property type="entry name" value="HsaA"/>
    <property type="match status" value="1"/>
</dbReference>
<dbReference type="SUPFAM" id="SSF47203">
    <property type="entry name" value="Acyl-CoA dehydrogenase C-terminal domain-like"/>
    <property type="match status" value="1"/>
</dbReference>
<dbReference type="SUPFAM" id="SSF56645">
    <property type="entry name" value="Acyl-CoA dehydrogenase NM domain-like"/>
    <property type="match status" value="1"/>
</dbReference>
<dbReference type="PROSITE" id="PS00072">
    <property type="entry name" value="ACYL_COA_DH_1"/>
    <property type="match status" value="1"/>
</dbReference>
<dbReference type="PROSITE" id="PS00073">
    <property type="entry name" value="ACYL_COA_DH_2"/>
    <property type="match status" value="1"/>
</dbReference>
<proteinExistence type="evidence at protein level"/>
<accession>P16219</accession>
<accession>P78331</accession>
<feature type="transit peptide" description="Mitochondrion" evidence="5">
    <location>
        <begin position="1"/>
        <end position="24"/>
    </location>
</feature>
<feature type="chain" id="PRO_0000000498" description="Short-chain specific acyl-CoA dehydrogenase, mitochondrial">
    <location>
        <begin position="25"/>
        <end position="412"/>
    </location>
</feature>
<feature type="active site" description="Proton acceptor" evidence="1">
    <location>
        <position position="392"/>
    </location>
</feature>
<feature type="binding site" description="in other chain" evidence="9">
    <location>
        <begin position="152"/>
        <end position="161"/>
    </location>
    <ligand>
        <name>FAD</name>
        <dbReference type="ChEBI" id="CHEBI:57692"/>
        <note>ligand shared between dimeric partners</note>
    </ligand>
</feature>
<feature type="binding site">
    <location>
        <position position="161"/>
    </location>
    <ligand>
        <name>substrate</name>
    </ligand>
</feature>
<feature type="binding site" description="in other chain" evidence="9">
    <location>
        <begin position="185"/>
        <end position="187"/>
    </location>
    <ligand>
        <name>FAD</name>
        <dbReference type="ChEBI" id="CHEBI:57692"/>
        <note>ligand shared between dimeric partners</note>
    </ligand>
</feature>
<feature type="binding site">
    <location>
        <begin position="269"/>
        <end position="272"/>
    </location>
    <ligand>
        <name>substrate</name>
    </ligand>
</feature>
<feature type="binding site" evidence="9">
    <location>
        <position position="297"/>
    </location>
    <ligand>
        <name>FAD</name>
        <dbReference type="ChEBI" id="CHEBI:57692"/>
        <note>ligand shared between dimeric partners</note>
    </ligand>
</feature>
<feature type="binding site" description="in other chain" evidence="9">
    <location>
        <position position="308"/>
    </location>
    <ligand>
        <name>FAD</name>
        <dbReference type="ChEBI" id="CHEBI:57692"/>
        <note>ligand shared between dimeric partners</note>
    </ligand>
</feature>
<feature type="binding site" evidence="9">
    <location>
        <begin position="365"/>
        <end position="369"/>
    </location>
    <ligand>
        <name>FAD</name>
        <dbReference type="ChEBI" id="CHEBI:57692"/>
        <note>ligand shared between dimeric partners</note>
    </ligand>
</feature>
<feature type="binding site">
    <location>
        <position position="393"/>
    </location>
    <ligand>
        <name>substrate</name>
    </ligand>
</feature>
<feature type="binding site" description="in other chain" evidence="9">
    <location>
        <begin position="394"/>
        <end position="396"/>
    </location>
    <ligand>
        <name>FAD</name>
        <dbReference type="ChEBI" id="CHEBI:57692"/>
        <note>ligand shared between dimeric partners</note>
    </ligand>
</feature>
<feature type="modified residue" description="Phosphothreonine" evidence="2">
    <location>
        <position position="27"/>
    </location>
</feature>
<feature type="modified residue" description="N6-acetyllysine; alternate" evidence="2">
    <location>
        <position position="51"/>
    </location>
</feature>
<feature type="modified residue" description="N6-succinyllysine; alternate" evidence="2">
    <location>
        <position position="51"/>
    </location>
</feature>
<feature type="modified residue" description="N6-acetyllysine" evidence="2">
    <location>
        <position position="72"/>
    </location>
</feature>
<feature type="modified residue" description="N6-acetyllysine; alternate" evidence="2">
    <location>
        <position position="129"/>
    </location>
</feature>
<feature type="modified residue" description="N6-succinyllysine; alternate" evidence="2">
    <location>
        <position position="129"/>
    </location>
</feature>
<feature type="modified residue" description="N6-acetyllysine" evidence="2">
    <location>
        <position position="208"/>
    </location>
</feature>
<feature type="modified residue" description="N6-acetyllysine; alternate" evidence="2">
    <location>
        <position position="262"/>
    </location>
</feature>
<feature type="modified residue" description="N6-succinyllysine; alternate" evidence="2">
    <location>
        <position position="262"/>
    </location>
</feature>
<feature type="modified residue" description="N6-acetyllysine; alternate" evidence="2">
    <location>
        <position position="306"/>
    </location>
</feature>
<feature type="modified residue" description="N6-succinyllysine; alternate" evidence="2">
    <location>
        <position position="306"/>
    </location>
</feature>
<feature type="sequence variant" id="VAR_000310" description="In ACADSD; dbSNP:rs121908003." evidence="6">
    <original>R</original>
    <variation>W</variation>
    <location>
        <position position="46"/>
    </location>
</feature>
<feature type="sequence variant" id="VAR_013565" description="In ACADSD; loss of acyl-CoA dehydrogenase activity; dbSNP:rs121908005." evidence="4">
    <original>G</original>
    <variation>S</variation>
    <location>
        <position position="90"/>
    </location>
</feature>
<feature type="sequence variant" id="VAR_000311" description="In ACADSD; dbSNP:rs121908004." evidence="8">
    <original>G</original>
    <variation>C</variation>
    <location>
        <position position="92"/>
    </location>
</feature>
<feature type="sequence variant" id="VAR_013566" description="In ACADSD; loss of acyl-CoA dehydrogenase activity; dbSNP:rs387906308." evidence="4">
    <location>
        <position position="104"/>
    </location>
</feature>
<feature type="sequence variant" id="VAR_000312" description="In ACADSD; dbSNP:rs61732144." evidence="6">
    <original>R</original>
    <variation>C</variation>
    <location>
        <position position="107"/>
    </location>
</feature>
<feature type="sequence variant" id="VAR_013567" description="69% of wild-type acyl-CoA dehydrogenase activity; confers susceptibility to ethylmalonicaciduria; dbSNP:rs1800556." evidence="4 8">
    <original>R</original>
    <variation>W</variation>
    <location>
        <position position="171"/>
    </location>
</feature>
<feature type="sequence variant" id="VAR_000314" description="In ACADSD; dbSNP:rs57443665." evidence="8">
    <original>W</original>
    <variation>R</variation>
    <location>
        <position position="177"/>
    </location>
</feature>
<feature type="sequence variant" id="VAR_013568" description="In ACADSD; loss of acyl-CoA dehydrogenase activity; dbSNP:rs28940874." evidence="4">
    <original>A</original>
    <variation>V</variation>
    <location>
        <position position="192"/>
    </location>
</feature>
<feature type="sequence variant" id="VAR_000315" description="86% of wild-type acyl-CoA dehydrogenase activity; confers susceptibility to ethylmalonicaciduria; dbSNP:rs1799958." evidence="4 8">
    <original>G</original>
    <variation>S</variation>
    <location>
        <position position="209"/>
    </location>
</feature>
<feature type="sequence variant" id="VAR_013569" description="In ACADSD; loss of acyl-CoA dehydrogenase activity; dbSNP:rs121908006." evidence="4">
    <original>R</original>
    <variation>W</variation>
    <location>
        <position position="325"/>
    </location>
</feature>
<feature type="sequence variant" id="VAR_013570" description="In ACADSD; loss of acyl-CoA dehydrogenase activity; dbSNP:rs28941773." evidence="4">
    <original>S</original>
    <variation>L</variation>
    <location>
        <position position="353"/>
    </location>
</feature>
<feature type="sequence variant" id="VAR_013571" description="In ACADSD; loss of acyl-CoA dehydrogenase activity; dbSNP:rs28940875." evidence="4">
    <original>R</original>
    <variation>W</variation>
    <location>
        <position position="380"/>
    </location>
</feature>
<feature type="sequence variant" id="VAR_000316" description="In ACADSD; dbSNP:rs28940872." evidence="8">
    <original>R</original>
    <variation>C</variation>
    <location>
        <position position="383"/>
    </location>
</feature>
<feature type="sequence variant" id="VAR_033458" description="In dbSNP:rs35233375.">
    <original>R</original>
    <variation>H</variation>
    <location>
        <position position="383"/>
    </location>
</feature>
<feature type="helix" evidence="12">
    <location>
        <begin position="36"/>
        <end position="52"/>
    </location>
</feature>
<feature type="turn" evidence="12">
    <location>
        <begin position="53"/>
        <end position="56"/>
    </location>
</feature>
<feature type="helix" evidence="12">
    <location>
        <begin position="57"/>
        <end position="63"/>
    </location>
</feature>
<feature type="helix" evidence="12">
    <location>
        <begin position="68"/>
        <end position="77"/>
    </location>
</feature>
<feature type="turn" evidence="12">
    <location>
        <begin position="78"/>
        <end position="80"/>
    </location>
</feature>
<feature type="strand" evidence="14">
    <location>
        <begin position="82"/>
        <end position="84"/>
    </location>
</feature>
<feature type="helix" evidence="12">
    <location>
        <begin position="86"/>
        <end position="88"/>
    </location>
</feature>
<feature type="helix" evidence="12">
    <location>
        <begin position="95"/>
        <end position="108"/>
    </location>
</feature>
<feature type="helix" evidence="12">
    <location>
        <begin position="110"/>
        <end position="121"/>
    </location>
</feature>
<feature type="helix" evidence="12">
    <location>
        <begin position="124"/>
        <end position="130"/>
    </location>
</feature>
<feature type="helix" evidence="12">
    <location>
        <begin position="133"/>
        <end position="139"/>
    </location>
</feature>
<feature type="helix" evidence="12">
    <location>
        <begin position="141"/>
        <end position="143"/>
    </location>
</feature>
<feature type="strand" evidence="12">
    <location>
        <begin position="144"/>
        <end position="147"/>
    </location>
</feature>
<feature type="strand" evidence="12">
    <location>
        <begin position="150"/>
        <end position="153"/>
    </location>
</feature>
<feature type="strand" evidence="12">
    <location>
        <begin position="159"/>
        <end position="162"/>
    </location>
</feature>
<feature type="helix" evidence="12">
    <location>
        <begin position="163"/>
        <end position="165"/>
    </location>
</feature>
<feature type="strand" evidence="12">
    <location>
        <begin position="169"/>
        <end position="173"/>
    </location>
</feature>
<feature type="strand" evidence="12">
    <location>
        <begin position="176"/>
        <end position="187"/>
    </location>
</feature>
<feature type="turn" evidence="12">
    <location>
        <begin position="188"/>
        <end position="191"/>
    </location>
</feature>
<feature type="strand" evidence="12">
    <location>
        <begin position="193"/>
        <end position="200"/>
    </location>
</feature>
<feature type="strand" evidence="12">
    <location>
        <begin position="203"/>
        <end position="205"/>
    </location>
</feature>
<feature type="turn" evidence="14">
    <location>
        <begin position="206"/>
        <end position="208"/>
    </location>
</feature>
<feature type="strand" evidence="12">
    <location>
        <begin position="210"/>
        <end position="218"/>
    </location>
</feature>
<feature type="strand" evidence="12">
    <location>
        <begin position="222"/>
        <end position="224"/>
    </location>
</feature>
<feature type="strand" evidence="12">
    <location>
        <begin position="230"/>
        <end position="232"/>
    </location>
</feature>
<feature type="strand" evidence="12">
    <location>
        <begin position="238"/>
        <end position="249"/>
    </location>
</feature>
<feature type="helix" evidence="12">
    <location>
        <begin position="250"/>
        <end position="252"/>
    </location>
</feature>
<feature type="strand" evidence="12">
    <location>
        <begin position="253"/>
        <end position="256"/>
    </location>
</feature>
<feature type="turn" evidence="13">
    <location>
        <begin position="257"/>
        <end position="259"/>
    </location>
</feature>
<feature type="helix" evidence="12">
    <location>
        <begin position="260"/>
        <end position="296"/>
    </location>
</feature>
<feature type="helix" evidence="12">
    <location>
        <begin position="304"/>
        <end position="306"/>
    </location>
</feature>
<feature type="helix" evidence="12">
    <location>
        <begin position="308"/>
        <end position="336"/>
    </location>
</feature>
<feature type="helix" evidence="12">
    <location>
        <begin position="342"/>
        <end position="367"/>
    </location>
</feature>
<feature type="helix" evidence="12">
    <location>
        <begin position="368"/>
        <end position="372"/>
    </location>
</feature>
<feature type="helix" evidence="12">
    <location>
        <begin position="378"/>
        <end position="388"/>
    </location>
</feature>
<feature type="turn" evidence="12">
    <location>
        <begin position="389"/>
        <end position="392"/>
    </location>
</feature>
<feature type="helix" evidence="12">
    <location>
        <begin position="395"/>
        <end position="411"/>
    </location>
</feature>